<dbReference type="EC" id="3.1.-.-"/>
<dbReference type="EMBL" id="AC020622">
    <property type="protein sequence ID" value="AAF76467.1"/>
    <property type="status" value="ALT_SEQ"/>
    <property type="molecule type" value="Genomic_DNA"/>
</dbReference>
<dbReference type="EMBL" id="CP002684">
    <property type="protein sequence ID" value="AEE27345.1"/>
    <property type="molecule type" value="Genomic_DNA"/>
</dbReference>
<dbReference type="EMBL" id="CP002684">
    <property type="protein sequence ID" value="ANM58562.1"/>
    <property type="molecule type" value="Genomic_DNA"/>
</dbReference>
<dbReference type="PIR" id="F86150">
    <property type="entry name" value="F86150"/>
</dbReference>
<dbReference type="RefSeq" id="NP_001320987.1">
    <molecule id="Q9LPD2-1"/>
    <property type="nucleotide sequence ID" value="NM_001331312.1"/>
</dbReference>
<dbReference type="RefSeq" id="NP_171691.2">
    <molecule id="Q9LPD2-1"/>
    <property type="nucleotide sequence ID" value="NM_100069.3"/>
</dbReference>
<dbReference type="SMR" id="Q9LPD2"/>
<dbReference type="BioGRID" id="22614">
    <property type="interactions" value="3"/>
</dbReference>
<dbReference type="FunCoup" id="Q9LPD2">
    <property type="interactions" value="270"/>
</dbReference>
<dbReference type="IntAct" id="Q9LPD2">
    <property type="interactions" value="3"/>
</dbReference>
<dbReference type="STRING" id="3702.Q9LPD2"/>
<dbReference type="iPTMnet" id="Q9LPD2"/>
<dbReference type="PaxDb" id="3702-AT1G01880.1"/>
<dbReference type="EnsemblPlants" id="AT1G01880.1">
    <molecule id="Q9LPD2-1"/>
    <property type="protein sequence ID" value="AT1G01880.1"/>
    <property type="gene ID" value="AT1G01880"/>
</dbReference>
<dbReference type="EnsemblPlants" id="AT1G01880.3">
    <molecule id="Q9LPD2-1"/>
    <property type="protein sequence ID" value="AT1G01880.3"/>
    <property type="gene ID" value="AT1G01880"/>
</dbReference>
<dbReference type="GeneID" id="837373"/>
<dbReference type="Gramene" id="AT1G01880.1">
    <molecule id="Q9LPD2-1"/>
    <property type="protein sequence ID" value="AT1G01880.1"/>
    <property type="gene ID" value="AT1G01880"/>
</dbReference>
<dbReference type="Gramene" id="AT1G01880.3">
    <molecule id="Q9LPD2-1"/>
    <property type="protein sequence ID" value="AT1G01880.3"/>
    <property type="gene ID" value="AT1G01880"/>
</dbReference>
<dbReference type="KEGG" id="ath:AT1G01880"/>
<dbReference type="Araport" id="AT1G01880"/>
<dbReference type="TAIR" id="AT1G01880">
    <property type="gene designation" value="GEN1"/>
</dbReference>
<dbReference type="eggNOG" id="KOG2519">
    <property type="taxonomic scope" value="Eukaryota"/>
</dbReference>
<dbReference type="HOGENOM" id="CLU_013777_1_0_1"/>
<dbReference type="InParanoid" id="Q9LPD2"/>
<dbReference type="OMA" id="RNLYFRT"/>
<dbReference type="PRO" id="PR:Q9LPD2"/>
<dbReference type="Proteomes" id="UP000006548">
    <property type="component" value="Chromosome 1"/>
</dbReference>
<dbReference type="ExpressionAtlas" id="Q9LPD2">
    <property type="expression patterns" value="baseline and differential"/>
</dbReference>
<dbReference type="GO" id="GO:0005634">
    <property type="term" value="C:nucleus"/>
    <property type="evidence" value="ECO:0007669"/>
    <property type="project" value="UniProtKB-SubCell"/>
</dbReference>
<dbReference type="GO" id="GO:0017108">
    <property type="term" value="F:5'-flap endonuclease activity"/>
    <property type="evidence" value="ECO:0000314"/>
    <property type="project" value="UniProtKB"/>
</dbReference>
<dbReference type="GO" id="GO:0008821">
    <property type="term" value="F:crossover junction DNA endonuclease activity"/>
    <property type="evidence" value="ECO:0000314"/>
    <property type="project" value="TAIR"/>
</dbReference>
<dbReference type="GO" id="GO:0003677">
    <property type="term" value="F:DNA binding"/>
    <property type="evidence" value="ECO:0007669"/>
    <property type="project" value="InterPro"/>
</dbReference>
<dbReference type="GO" id="GO:0046872">
    <property type="term" value="F:metal ion binding"/>
    <property type="evidence" value="ECO:0007669"/>
    <property type="project" value="UniProtKB-KW"/>
</dbReference>
<dbReference type="GO" id="GO:0006281">
    <property type="term" value="P:DNA repair"/>
    <property type="evidence" value="ECO:0007669"/>
    <property type="project" value="UniProtKB-KW"/>
</dbReference>
<dbReference type="GO" id="GO:0009650">
    <property type="term" value="P:UV protection"/>
    <property type="evidence" value="ECO:0000316"/>
    <property type="project" value="UniProtKB"/>
</dbReference>
<dbReference type="CDD" id="cd09905">
    <property type="entry name" value="H3TH_GEN1"/>
    <property type="match status" value="1"/>
</dbReference>
<dbReference type="CDD" id="cd09869">
    <property type="entry name" value="PIN_GEN1"/>
    <property type="match status" value="1"/>
</dbReference>
<dbReference type="FunFam" id="1.10.150.20:FF:000030">
    <property type="entry name" value="Flap endonuclease GEN-like 1"/>
    <property type="match status" value="1"/>
</dbReference>
<dbReference type="FunFam" id="3.40.50.1010:FF:000032">
    <property type="entry name" value="Flap endonuclease GEN-like 1"/>
    <property type="match status" value="1"/>
</dbReference>
<dbReference type="Gene3D" id="1.10.150.20">
    <property type="entry name" value="5' to 3' exonuclease, C-terminal subdomain"/>
    <property type="match status" value="1"/>
</dbReference>
<dbReference type="Gene3D" id="3.40.50.1010">
    <property type="entry name" value="5'-nuclease"/>
    <property type="match status" value="1"/>
</dbReference>
<dbReference type="InterPro" id="IPR036279">
    <property type="entry name" value="5-3_exonuclease_C_sf"/>
</dbReference>
<dbReference type="InterPro" id="IPR008918">
    <property type="entry name" value="HhH2"/>
</dbReference>
<dbReference type="InterPro" id="IPR029060">
    <property type="entry name" value="PIN-like_dom_sf"/>
</dbReference>
<dbReference type="InterPro" id="IPR006086">
    <property type="entry name" value="XPG-I_dom"/>
</dbReference>
<dbReference type="InterPro" id="IPR006084">
    <property type="entry name" value="XPG/Rad2"/>
</dbReference>
<dbReference type="InterPro" id="IPR006085">
    <property type="entry name" value="XPG_DNA_repair_N"/>
</dbReference>
<dbReference type="PANTHER" id="PTHR11081:SF59">
    <property type="entry name" value="FI23547P1"/>
    <property type="match status" value="1"/>
</dbReference>
<dbReference type="PANTHER" id="PTHR11081">
    <property type="entry name" value="FLAP ENDONUCLEASE FAMILY MEMBER"/>
    <property type="match status" value="1"/>
</dbReference>
<dbReference type="Pfam" id="PF00867">
    <property type="entry name" value="XPG_I"/>
    <property type="match status" value="1"/>
</dbReference>
<dbReference type="Pfam" id="PF00752">
    <property type="entry name" value="XPG_N"/>
    <property type="match status" value="1"/>
</dbReference>
<dbReference type="PRINTS" id="PR00853">
    <property type="entry name" value="XPGRADSUPER"/>
</dbReference>
<dbReference type="SMART" id="SM00279">
    <property type="entry name" value="HhH2"/>
    <property type="match status" value="1"/>
</dbReference>
<dbReference type="SMART" id="SM00484">
    <property type="entry name" value="XPGI"/>
    <property type="match status" value="1"/>
</dbReference>
<dbReference type="SMART" id="SM00485">
    <property type="entry name" value="XPGN"/>
    <property type="match status" value="1"/>
</dbReference>
<dbReference type="SUPFAM" id="SSF47807">
    <property type="entry name" value="5' to 3' exonuclease, C-terminal subdomain"/>
    <property type="match status" value="1"/>
</dbReference>
<dbReference type="SUPFAM" id="SSF88723">
    <property type="entry name" value="PIN domain-like"/>
    <property type="match status" value="1"/>
</dbReference>
<evidence type="ECO:0000250" key="1">
    <source>
        <dbReference type="UniProtKB" id="P39748"/>
    </source>
</evidence>
<evidence type="ECO:0000250" key="2">
    <source>
        <dbReference type="UniProtKB" id="Q17RS7"/>
    </source>
</evidence>
<evidence type="ECO:0000250" key="3">
    <source>
        <dbReference type="UniProtKB" id="Q58839"/>
    </source>
</evidence>
<evidence type="ECO:0000250" key="4">
    <source>
        <dbReference type="UniProtKB" id="Q9UQ84"/>
    </source>
</evidence>
<evidence type="ECO:0000256" key="5">
    <source>
        <dbReference type="SAM" id="MobiDB-lite"/>
    </source>
</evidence>
<evidence type="ECO:0000269" key="6">
    <source>
    </source>
</evidence>
<evidence type="ECO:0000269" key="7">
    <source>
    </source>
</evidence>
<evidence type="ECO:0000303" key="8">
    <source>
    </source>
</evidence>
<evidence type="ECO:0000305" key="9"/>
<evidence type="ECO:0000312" key="10">
    <source>
        <dbReference type="Araport" id="AT1G01880"/>
    </source>
</evidence>
<evidence type="ECO:0000312" key="11">
    <source>
        <dbReference type="EMBL" id="AAF76467.1"/>
    </source>
</evidence>
<protein>
    <recommendedName>
        <fullName evidence="8">Flap endonuclease GEN-like 1</fullName>
        <shortName evidence="8">AtGEN1</shortName>
        <shortName evidence="8">XPG-like endonuclease 1</shortName>
        <ecNumber>3.1.-.-</ecNumber>
    </recommendedName>
</protein>
<gene>
    <name evidence="8" type="primary">GEN1</name>
    <name evidence="10" type="ordered locus">At1g01880</name>
    <name evidence="11" type="ORF">F22M8.2</name>
</gene>
<organism>
    <name type="scientific">Arabidopsis thaliana</name>
    <name type="common">Mouse-ear cress</name>
    <dbReference type="NCBI Taxonomy" id="3702"/>
    <lineage>
        <taxon>Eukaryota</taxon>
        <taxon>Viridiplantae</taxon>
        <taxon>Streptophyta</taxon>
        <taxon>Embryophyta</taxon>
        <taxon>Tracheophyta</taxon>
        <taxon>Spermatophyta</taxon>
        <taxon>Magnoliopsida</taxon>
        <taxon>eudicotyledons</taxon>
        <taxon>Gunneridae</taxon>
        <taxon>Pentapetalae</taxon>
        <taxon>rosids</taxon>
        <taxon>malvids</taxon>
        <taxon>Brassicales</taxon>
        <taxon>Brassicaceae</taxon>
        <taxon>Camelineae</taxon>
        <taxon>Arabidopsis</taxon>
    </lineage>
</organism>
<sequence length="599" mass="67193">MGVGGNFWDLLRPYAQQQGFDFLRNKRVAVDLSFWIVQHETAVKGFVLKPHLRLTFFRTINLFSKFGAYPVFVVDGTPSPLKSQARISRFFRSSGIDTCNLPVIKDGVSVERNKLFSEWVRECVELLELLGIPVLKANGEAEALCAQLNSQGFVDACITPDSDAFLFGAMCVIKDIKPNSREPFECYHMSHIESGLGLKRKHLIAISLLVGNDYDSGGVLGIGVDKALRIVREFSEDQVLERLQDIGNGLQPAVPGGIKSGDDGEEFRSEMKKRSPHCSRCGHLGSKRTHFKSSCEHCGCDSGCIKKPLGFRCECSFCSKDRDLREQKKTNDWWIKVCDKIALAPEFPNRKIIELYLSDGLMTGDGSSMSWGTPDTGMLVDLMVFKLHWDPSYVRKMLLPMLSTIYLREKARNNTGYALLCDQYEFHSIKCIKTRYGHQSFVIRWRKPKSTSGYSHSHSEPEESIVVLEEEEESVDPLDGLNEPQVQNDNGDCFLLTDECIGLVQSAFPDETEHFLHEKKLRESKKKNVSEEETATPRATTMGVQRSITDFYRSAKKAAAGQSIETGGSSKASAEKKRQATSTSSSNLTKSVRRRLLFG</sequence>
<name>GENL1_ARATH</name>
<comment type="function">
    <text evidence="6">Endonuclease which cleaves flap structures at the junction between single-stranded DNA and double-stranded DNA with a specific cleavage site in the 5' overhang strand exactly one nucleotide 3' of the branch point (PubMed:25037209). Structure- and sequence-specific nuclease that resolves holliday junctions (HJs) by symmetrically oriented incisions in two opposing strands near the junction point, thus leading to ligatable products; HJs are physical links between homologous DNA molecules that arise as central intermediary structures during homologous recombination and repair in meiotic and somatic cells (PubMed:25037209). Structure-specific nuclease with 5'-flap endonuclease activity, preferentially cleaving static flaps 5' overhang strand exactly one nucleotide in the 3' direction of the branch point (PubMed:25037209). Also able to cleave double-stranded flap strand 1 exactly at the branch point (PubMed:25037209).</text>
</comment>
<comment type="cofactor">
    <cofactor evidence="2">
        <name>Mg(2+)</name>
        <dbReference type="ChEBI" id="CHEBI:18420"/>
    </cofactor>
    <text evidence="2">Binds 2 magnesium ions per subunit. They probably participate in the reaction catalyzed by the enzyme. May bind an additional third magnesium ion after substrate binding.</text>
</comment>
<comment type="subcellular location">
    <subcellularLocation>
        <location evidence="2">Nucleus</location>
    </subcellularLocation>
</comment>
<comment type="alternative products">
    <event type="alternative splicing"/>
    <isoform>
        <id>Q9LPD2-1</id>
        <name>1</name>
        <sequence type="displayed"/>
    </isoform>
    <text>A number of isoforms are produced. According to EST sequences.</text>
</comment>
<comment type="disruption phenotype">
    <text evidence="7">Normal sensitivity to DNA damaging agents (PubMed:26704385). Mild UV sensitivity in the gen1 send1 double mutant (PubMed:26704385).</text>
</comment>
<comment type="similarity">
    <text evidence="9">Belongs to the XPG/RAD2 endonuclease family. GEN subfamily.</text>
</comment>
<comment type="sequence caution" evidence="9">
    <conflict type="erroneous gene model prediction">
        <sequence resource="EMBL-CDS" id="AAF76467"/>
    </conflict>
</comment>
<keyword id="KW-0025">Alternative splicing</keyword>
<keyword id="KW-0227">DNA damage</keyword>
<keyword id="KW-0234">DNA repair</keyword>
<keyword id="KW-0255">Endonuclease</keyword>
<keyword id="KW-0378">Hydrolase</keyword>
<keyword id="KW-0460">Magnesium</keyword>
<keyword id="KW-0479">Metal-binding</keyword>
<keyword id="KW-0540">Nuclease</keyword>
<keyword id="KW-0539">Nucleus</keyword>
<keyword id="KW-1185">Reference proteome</keyword>
<reference key="1">
    <citation type="journal article" date="2000" name="Nature">
        <title>Sequence and analysis of chromosome 1 of the plant Arabidopsis thaliana.</title>
        <authorList>
            <person name="Theologis A."/>
            <person name="Ecker J.R."/>
            <person name="Palm C.J."/>
            <person name="Federspiel N.A."/>
            <person name="Kaul S."/>
            <person name="White O."/>
            <person name="Alonso J."/>
            <person name="Altafi H."/>
            <person name="Araujo R."/>
            <person name="Bowman C.L."/>
            <person name="Brooks S.Y."/>
            <person name="Buehler E."/>
            <person name="Chan A."/>
            <person name="Chao Q."/>
            <person name="Chen H."/>
            <person name="Cheuk R.F."/>
            <person name="Chin C.W."/>
            <person name="Chung M.K."/>
            <person name="Conn L."/>
            <person name="Conway A.B."/>
            <person name="Conway A.R."/>
            <person name="Creasy T.H."/>
            <person name="Dewar K."/>
            <person name="Dunn P."/>
            <person name="Etgu P."/>
            <person name="Feldblyum T.V."/>
            <person name="Feng J.-D."/>
            <person name="Fong B."/>
            <person name="Fujii C.Y."/>
            <person name="Gill J.E."/>
            <person name="Goldsmith A.D."/>
            <person name="Haas B."/>
            <person name="Hansen N.F."/>
            <person name="Hughes B."/>
            <person name="Huizar L."/>
            <person name="Hunter J.L."/>
            <person name="Jenkins J."/>
            <person name="Johnson-Hopson C."/>
            <person name="Khan S."/>
            <person name="Khaykin E."/>
            <person name="Kim C.J."/>
            <person name="Koo H.L."/>
            <person name="Kremenetskaia I."/>
            <person name="Kurtz D.B."/>
            <person name="Kwan A."/>
            <person name="Lam B."/>
            <person name="Langin-Hooper S."/>
            <person name="Lee A."/>
            <person name="Lee J.M."/>
            <person name="Lenz C.A."/>
            <person name="Li J.H."/>
            <person name="Li Y.-P."/>
            <person name="Lin X."/>
            <person name="Liu S.X."/>
            <person name="Liu Z.A."/>
            <person name="Luros J.S."/>
            <person name="Maiti R."/>
            <person name="Marziali A."/>
            <person name="Militscher J."/>
            <person name="Miranda M."/>
            <person name="Nguyen M."/>
            <person name="Nierman W.C."/>
            <person name="Osborne B.I."/>
            <person name="Pai G."/>
            <person name="Peterson J."/>
            <person name="Pham P.K."/>
            <person name="Rizzo M."/>
            <person name="Rooney T."/>
            <person name="Rowley D."/>
            <person name="Sakano H."/>
            <person name="Salzberg S.L."/>
            <person name="Schwartz J.R."/>
            <person name="Shinn P."/>
            <person name="Southwick A.M."/>
            <person name="Sun H."/>
            <person name="Tallon L.J."/>
            <person name="Tambunga G."/>
            <person name="Toriumi M.J."/>
            <person name="Town C.D."/>
            <person name="Utterback T."/>
            <person name="Van Aken S."/>
            <person name="Vaysberg M."/>
            <person name="Vysotskaia V.S."/>
            <person name="Walker M."/>
            <person name="Wu D."/>
            <person name="Yu G."/>
            <person name="Fraser C.M."/>
            <person name="Venter J.C."/>
            <person name="Davis R.W."/>
        </authorList>
    </citation>
    <scope>NUCLEOTIDE SEQUENCE [LARGE SCALE GENOMIC DNA]</scope>
    <source>
        <strain>cv. Columbia</strain>
    </source>
</reference>
<reference key="2">
    <citation type="journal article" date="2017" name="Plant J.">
        <title>Araport11: a complete reannotation of the Arabidopsis thaliana reference genome.</title>
        <authorList>
            <person name="Cheng C.Y."/>
            <person name="Krishnakumar V."/>
            <person name="Chan A.P."/>
            <person name="Thibaud-Nissen F."/>
            <person name="Schobel S."/>
            <person name="Town C.D."/>
        </authorList>
    </citation>
    <scope>GENOME REANNOTATION</scope>
    <source>
        <strain>cv. Columbia</strain>
    </source>
</reference>
<reference key="3">
    <citation type="journal article" date="2014" name="Plant Physiol.">
        <title>AtGEN1 and AtSEND1, two paralogs in Arabidopsis, possess holliday junction resolvase activity.</title>
        <authorList>
            <person name="Bauknecht M."/>
            <person name="Kobbe D."/>
        </authorList>
    </citation>
    <scope>FUNCTION</scope>
    <scope>MUTAGENESIS OF ASP-75</scope>
    <source>
        <strain>cv. Columbia</strain>
    </source>
</reference>
<reference key="4">
    <citation type="journal article" date="2016" name="Plant Cell">
        <title>The structure-specific endonucleases MUS81 and SEND1 are essential for telomere stability in Arabidopsis.</title>
        <authorList>
            <person name="Olivier M."/>
            <person name="Da Ines O."/>
            <person name="Amiard S."/>
            <person name="Serra H."/>
            <person name="Goubely C."/>
            <person name="White C.I."/>
            <person name="Gallego M.E."/>
        </authorList>
    </citation>
    <scope>DISRUPTION PHENOTYPE</scope>
    <source>
        <strain>cv. Columbia</strain>
    </source>
</reference>
<accession>Q9LPD2</accession>
<accession>F4HU72</accession>
<feature type="chain" id="PRO_0000315622" description="Flap endonuclease GEN-like 1">
    <location>
        <begin position="1"/>
        <end position="599"/>
    </location>
</feature>
<feature type="region of interest" description="N-domain">
    <location>
        <begin position="1"/>
        <end position="96"/>
    </location>
</feature>
<feature type="region of interest" description="XPG-N domain" evidence="2">
    <location>
        <begin position="2"/>
        <end position="95"/>
    </location>
</feature>
<feature type="region of interest" description="I-domain">
    <location>
        <begin position="128"/>
        <end position="217"/>
    </location>
</feature>
<feature type="region of interest" description="XPG-I domain" evidence="2">
    <location>
        <begin position="128"/>
        <end position="213"/>
    </location>
</feature>
<feature type="region of interest" description="5'-3' exonuclease domain" evidence="2">
    <location>
        <begin position="213"/>
        <end position="407"/>
    </location>
</feature>
<feature type="region of interest" description="Disordered" evidence="5">
    <location>
        <begin position="522"/>
        <end position="545"/>
    </location>
</feature>
<feature type="region of interest" description="Disordered" evidence="5">
    <location>
        <begin position="559"/>
        <end position="599"/>
    </location>
</feature>
<feature type="compositionally biased region" description="Polar residues" evidence="5">
    <location>
        <begin position="563"/>
        <end position="572"/>
    </location>
</feature>
<feature type="compositionally biased region" description="Polar residues" evidence="5">
    <location>
        <begin position="580"/>
        <end position="590"/>
    </location>
</feature>
<feature type="binding site" evidence="1">
    <location>
        <position position="31"/>
    </location>
    <ligand>
        <name>Mg(2+)</name>
        <dbReference type="ChEBI" id="CHEBI:18420"/>
        <label>1</label>
    </ligand>
</feature>
<feature type="binding site" evidence="2">
    <location>
        <position position="75"/>
    </location>
    <ligand>
        <name>Mg(2+)</name>
        <dbReference type="ChEBI" id="CHEBI:18420"/>
        <label>1</label>
    </ligand>
</feature>
<feature type="binding site" evidence="2">
    <location>
        <position position="140"/>
    </location>
    <ligand>
        <name>Mg(2+)</name>
        <dbReference type="ChEBI" id="CHEBI:18420"/>
        <label>1</label>
    </ligand>
</feature>
<feature type="binding site" evidence="3">
    <location>
        <position position="142"/>
    </location>
    <ligand>
        <name>Mg(2+)</name>
        <dbReference type="ChEBI" id="CHEBI:18420"/>
        <label>1</label>
    </ligand>
</feature>
<feature type="binding site" evidence="4">
    <location>
        <position position="161"/>
    </location>
    <ligand>
        <name>Mg(2+)</name>
        <dbReference type="ChEBI" id="CHEBI:18420"/>
        <label>2</label>
    </ligand>
</feature>
<feature type="binding site" evidence="4">
    <location>
        <position position="163"/>
    </location>
    <ligand>
        <name>Mg(2+)</name>
        <dbReference type="ChEBI" id="CHEBI:18420"/>
        <label>2</label>
    </ligand>
</feature>
<feature type="binding site" evidence="3">
    <location>
        <position position="213"/>
    </location>
    <ligand>
        <name>Mg(2+)</name>
        <dbReference type="ChEBI" id="CHEBI:18420"/>
        <label>2</label>
    </ligand>
</feature>
<feature type="mutagenesis site" description="Impaired nuclease activity." evidence="6">
    <original>D</original>
    <variation>A</variation>
    <location>
        <position position="75"/>
    </location>
</feature>
<proteinExistence type="evidence at protein level"/>